<organism>
    <name type="scientific">Quercus ilex</name>
    <name type="common">Holly oak</name>
    <dbReference type="NCBI Taxonomy" id="58334"/>
    <lineage>
        <taxon>Eukaryota</taxon>
        <taxon>Viridiplantae</taxon>
        <taxon>Streptophyta</taxon>
        <taxon>Embryophyta</taxon>
        <taxon>Tracheophyta</taxon>
        <taxon>Spermatophyta</taxon>
        <taxon>Magnoliopsida</taxon>
        <taxon>eudicotyledons</taxon>
        <taxon>Gunneridae</taxon>
        <taxon>Pentapetalae</taxon>
        <taxon>rosids</taxon>
        <taxon>fabids</taxon>
        <taxon>Fagales</taxon>
        <taxon>Fagaceae</taxon>
        <taxon>Quercus</taxon>
    </lineage>
</organism>
<proteinExistence type="evidence at protein level"/>
<name>MYRS_QUEIL</name>
<protein>
    <recommendedName>
        <fullName>Myrcene synthase, chloroplastic</fullName>
        <ecNumber evidence="4">4.2.3.15</ecNumber>
    </recommendedName>
</protein>
<evidence type="ECO:0000250" key="1">
    <source>
        <dbReference type="UniProtKB" id="A0A1C9J6A7"/>
    </source>
</evidence>
<evidence type="ECO:0000250" key="2">
    <source>
        <dbReference type="UniProtKB" id="Q40577"/>
    </source>
</evidence>
<evidence type="ECO:0000255" key="3"/>
<evidence type="ECO:0000269" key="4">
    <source>
    </source>
</evidence>
<evidence type="ECO:0000305" key="5"/>
<comment type="function">
    <text evidence="4">Involved in monoterpene (C10) biosynthesis. The major product is myrcene followed by minor amounts (1.2%) of the cyclic monoterpene limonene.</text>
</comment>
<comment type="catalytic activity">
    <reaction evidence="4">
        <text>(2E)-geranyl diphosphate = beta-myrcene + diphosphate</text>
        <dbReference type="Rhea" id="RHEA:16965"/>
        <dbReference type="ChEBI" id="CHEBI:17221"/>
        <dbReference type="ChEBI" id="CHEBI:33019"/>
        <dbReference type="ChEBI" id="CHEBI:58057"/>
        <dbReference type="EC" id="4.2.3.15"/>
    </reaction>
</comment>
<comment type="cofactor">
    <cofactor evidence="1">
        <name>Mg(2+)</name>
        <dbReference type="ChEBI" id="CHEBI:18420"/>
    </cofactor>
    <cofactor evidence="1">
        <name>Mn(2+)</name>
        <dbReference type="ChEBI" id="CHEBI:29035"/>
    </cofactor>
    <text evidence="1">Binds 3 Mg(2+) or Mn(2+) ions per subunit.</text>
</comment>
<comment type="biophysicochemical properties">
    <kinetics>
        <KM evidence="4">84 uM for geranyl diphosphate</KM>
    </kinetics>
    <temperatureDependence>
        <text evidence="4">Optimum temperature is 40 degrees Celsius. Active up to 55 degrees Celsius.</text>
    </temperatureDependence>
</comment>
<comment type="subcellular location">
    <subcellularLocation>
        <location evidence="3">Plastid</location>
        <location evidence="3">Chloroplast</location>
    </subcellularLocation>
</comment>
<comment type="domain">
    <text evidence="2">The Asp-Asp-Xaa-Xaa-Asp/Glu (DDXXD/E) motif is important for the catalytic activity, presumably through binding to Mg(2+).</text>
</comment>
<comment type="similarity">
    <text evidence="5">Belongs to the terpene synthase family. Tpsb subfamily.</text>
</comment>
<sequence>MALKLLTSLPMYNFSRVPVSSKDPILLVTSRTRNGYLARPVQCMVANKVSTSPDILRRSANYQPSIWNHDYIESLRIEYVGETCTRQINVLKEQVRMMLHKVVNPLEQLELIEILQRLGLSYHFEEEIKRILDGVYNNDHGGDTWKAENLYATALKFRLLRQHGYSVSQEVFNSFKDERGSFKACLCEDTKGMLSLYEASFFLIEGENILEEARDFSTKHLEEYVKQNKEKNLATLVNHSLEFPLHWRMPRLEARWFINIYRHNQDVNPILLEFAELDFNIVQAAHQADLKQVSTWWKSTGLVENLSFARDRPVENFFWTVGLIFQPQFGYCRRMFTKVFALITTIDDVYDVYGTLDELELFTDVVERWDINAMDQLPDYMKICFLTLHNSVNEMALDTMKEQRFHIIKYLKKAWVDLCRYYLVEAKWYSNKYRPSLQEYIENAWISIGAPTILVHAYFFVTNPITKEALDCLEEYPNIIRWSSIIARLADDLGTSTDELKRGDVPKAIQCYMNETGASEEGAREYIKYLISATWKKMNKDRAASSPFSHIFIEIALNLARMAQCLYQHGDGHGLGNRETKDRILSLLIQPIPLNKD</sequence>
<accession>Q93X23</accession>
<feature type="transit peptide" description="Chloroplast" evidence="3">
    <location>
        <begin position="1"/>
        <end position="56"/>
    </location>
</feature>
<feature type="chain" id="PRO_5000067003" description="Myrcene synthase, chloroplastic">
    <location>
        <begin position="57"/>
        <end position="597"/>
    </location>
</feature>
<feature type="short sequence motif" description="DDXXD motif" evidence="2">
    <location>
        <begin position="347"/>
        <end position="351"/>
    </location>
</feature>
<feature type="binding site" evidence="2">
    <location>
        <position position="310"/>
    </location>
    <ligand>
        <name>(2E)-geranyl diphosphate</name>
        <dbReference type="ChEBI" id="CHEBI:58057"/>
    </ligand>
</feature>
<feature type="binding site" evidence="2">
    <location>
        <position position="347"/>
    </location>
    <ligand>
        <name>(2E)-geranyl diphosphate</name>
        <dbReference type="ChEBI" id="CHEBI:58057"/>
    </ligand>
</feature>
<feature type="binding site" evidence="2">
    <location>
        <position position="347"/>
    </location>
    <ligand>
        <name>Mg(2+)</name>
        <dbReference type="ChEBI" id="CHEBI:18420"/>
        <label>1</label>
    </ligand>
</feature>
<feature type="binding site" evidence="2">
    <location>
        <position position="347"/>
    </location>
    <ligand>
        <name>Mg(2+)</name>
        <dbReference type="ChEBI" id="CHEBI:18420"/>
        <label>2</label>
    </ligand>
</feature>
<feature type="binding site" evidence="2">
    <location>
        <position position="351"/>
    </location>
    <ligand>
        <name>(2E)-geranyl diphosphate</name>
        <dbReference type="ChEBI" id="CHEBI:58057"/>
    </ligand>
</feature>
<feature type="binding site" evidence="2">
    <location>
        <position position="351"/>
    </location>
    <ligand>
        <name>Mg(2+)</name>
        <dbReference type="ChEBI" id="CHEBI:18420"/>
        <label>1</label>
    </ligand>
</feature>
<feature type="binding site" evidence="2">
    <location>
        <position position="351"/>
    </location>
    <ligand>
        <name>Mg(2+)</name>
        <dbReference type="ChEBI" id="CHEBI:18420"/>
        <label>2</label>
    </ligand>
</feature>
<feature type="binding site" evidence="2">
    <location>
        <position position="488"/>
    </location>
    <ligand>
        <name>(2E)-geranyl diphosphate</name>
        <dbReference type="ChEBI" id="CHEBI:58057"/>
    </ligand>
</feature>
<feature type="binding site" evidence="2">
    <location>
        <position position="491"/>
    </location>
    <ligand>
        <name>(2E)-geranyl diphosphate</name>
        <dbReference type="ChEBI" id="CHEBI:58057"/>
    </ligand>
</feature>
<feature type="binding site" evidence="2">
    <location>
        <position position="491"/>
    </location>
    <ligand>
        <name>Mg(2+)</name>
        <dbReference type="ChEBI" id="CHEBI:18420"/>
        <label>3</label>
    </ligand>
</feature>
<feature type="binding site" evidence="2">
    <location>
        <position position="495"/>
    </location>
    <ligand>
        <name>Mg(2+)</name>
        <dbReference type="ChEBI" id="CHEBI:18420"/>
        <label>3</label>
    </ligand>
</feature>
<feature type="binding site" evidence="2">
    <location>
        <position position="499"/>
    </location>
    <ligand>
        <name>Mg(2+)</name>
        <dbReference type="ChEBI" id="CHEBI:18420"/>
        <label>3</label>
    </ligand>
</feature>
<keyword id="KW-0150">Chloroplast</keyword>
<keyword id="KW-0456">Lyase</keyword>
<keyword id="KW-0460">Magnesium</keyword>
<keyword id="KW-0464">Manganese</keyword>
<keyword id="KW-0479">Metal-binding</keyword>
<keyword id="KW-0934">Plastid</keyword>
<keyword id="KW-0809">Transit peptide</keyword>
<reference key="1">
    <citation type="journal article" date="2001" name="Eur. J. Biochem.">
        <title>Isolation and functional analysis of a cDNA encoding a myrcene synthase from holm oak (Quercus ilex L.).</title>
        <authorList>
            <person name="Fischbach R.J."/>
            <person name="Zimmer W."/>
            <person name="Schnitzler J.-P."/>
        </authorList>
    </citation>
    <scope>NUCLEOTIDE SEQUENCE [MRNA]</scope>
    <scope>FUNCTION</scope>
    <scope>BIOPHYSICOCHEMICAL PROPERTIES</scope>
    <scope>CATALYTIC ACTIVITY</scope>
    <source>
        <tissue>Leaf</tissue>
    </source>
</reference>
<dbReference type="EC" id="4.2.3.15" evidence="4"/>
<dbReference type="EMBL" id="AJ304839">
    <property type="protein sequence ID" value="CAC41012.1"/>
    <property type="molecule type" value="mRNA"/>
</dbReference>
<dbReference type="SMR" id="Q93X23"/>
<dbReference type="GO" id="GO:0009507">
    <property type="term" value="C:chloroplast"/>
    <property type="evidence" value="ECO:0007669"/>
    <property type="project" value="UniProtKB-SubCell"/>
</dbReference>
<dbReference type="GO" id="GO:0000287">
    <property type="term" value="F:magnesium ion binding"/>
    <property type="evidence" value="ECO:0007669"/>
    <property type="project" value="InterPro"/>
</dbReference>
<dbReference type="GO" id="GO:0050551">
    <property type="term" value="F:myrcene synthase activity"/>
    <property type="evidence" value="ECO:0007669"/>
    <property type="project" value="UniProtKB-EC"/>
</dbReference>
<dbReference type="GO" id="GO:0016102">
    <property type="term" value="P:diterpenoid biosynthetic process"/>
    <property type="evidence" value="ECO:0007669"/>
    <property type="project" value="InterPro"/>
</dbReference>
<dbReference type="CDD" id="cd00684">
    <property type="entry name" value="Terpene_cyclase_plant_C1"/>
    <property type="match status" value="1"/>
</dbReference>
<dbReference type="FunFam" id="1.10.600.10:FF:000007">
    <property type="entry name" value="Isoprene synthase, chloroplastic"/>
    <property type="match status" value="1"/>
</dbReference>
<dbReference type="FunFam" id="1.50.10.130:FF:000001">
    <property type="entry name" value="Isoprene synthase, chloroplastic"/>
    <property type="match status" value="1"/>
</dbReference>
<dbReference type="Gene3D" id="1.10.600.10">
    <property type="entry name" value="Farnesyl Diphosphate Synthase"/>
    <property type="match status" value="1"/>
</dbReference>
<dbReference type="Gene3D" id="1.50.10.130">
    <property type="entry name" value="Terpene synthase, N-terminal domain"/>
    <property type="match status" value="1"/>
</dbReference>
<dbReference type="InterPro" id="IPR008949">
    <property type="entry name" value="Isoprenoid_synthase_dom_sf"/>
</dbReference>
<dbReference type="InterPro" id="IPR034741">
    <property type="entry name" value="Terpene_cyclase-like_1_C"/>
</dbReference>
<dbReference type="InterPro" id="IPR044814">
    <property type="entry name" value="Terpene_cyclase_plant_C1"/>
</dbReference>
<dbReference type="InterPro" id="IPR001906">
    <property type="entry name" value="Terpene_synth_N"/>
</dbReference>
<dbReference type="InterPro" id="IPR036965">
    <property type="entry name" value="Terpene_synth_N_sf"/>
</dbReference>
<dbReference type="InterPro" id="IPR050148">
    <property type="entry name" value="Terpene_synthase-like"/>
</dbReference>
<dbReference type="InterPro" id="IPR005630">
    <property type="entry name" value="Terpene_synthase_metal-bd"/>
</dbReference>
<dbReference type="InterPro" id="IPR008930">
    <property type="entry name" value="Terpenoid_cyclase/PrenylTrfase"/>
</dbReference>
<dbReference type="PANTHER" id="PTHR31225">
    <property type="entry name" value="OS04G0344100 PROTEIN-RELATED"/>
    <property type="match status" value="1"/>
</dbReference>
<dbReference type="PANTHER" id="PTHR31225:SF9">
    <property type="entry name" value="TERPENE SYNTHASE 10"/>
    <property type="match status" value="1"/>
</dbReference>
<dbReference type="Pfam" id="PF01397">
    <property type="entry name" value="Terpene_synth"/>
    <property type="match status" value="1"/>
</dbReference>
<dbReference type="Pfam" id="PF03936">
    <property type="entry name" value="Terpene_synth_C"/>
    <property type="match status" value="1"/>
</dbReference>
<dbReference type="SFLD" id="SFLDG01019">
    <property type="entry name" value="Terpene_Cyclase_Like_1_C_Termi"/>
    <property type="match status" value="1"/>
</dbReference>
<dbReference type="SFLD" id="SFLDG01604">
    <property type="entry name" value="Terpene_Cyclase_Like_1_C_Termi"/>
    <property type="match status" value="1"/>
</dbReference>
<dbReference type="SFLD" id="SFLDG01014">
    <property type="entry name" value="Terpene_Cyclase_Like_1_N-term"/>
    <property type="match status" value="1"/>
</dbReference>
<dbReference type="SUPFAM" id="SSF48239">
    <property type="entry name" value="Terpenoid cyclases/Protein prenyltransferases"/>
    <property type="match status" value="1"/>
</dbReference>
<dbReference type="SUPFAM" id="SSF48576">
    <property type="entry name" value="Terpenoid synthases"/>
    <property type="match status" value="1"/>
</dbReference>